<reference key="1">
    <citation type="journal article" date="2009" name="Genome Res.">
        <title>Comparative genomic analyses of the human fungal pathogens Coccidioides and their relatives.</title>
        <authorList>
            <person name="Sharpton T.J."/>
            <person name="Stajich J.E."/>
            <person name="Rounsley S.D."/>
            <person name="Gardner M.J."/>
            <person name="Wortman J.R."/>
            <person name="Jordar V.S."/>
            <person name="Maiti R."/>
            <person name="Kodira C.D."/>
            <person name="Neafsey D.E."/>
            <person name="Zeng Q."/>
            <person name="Hung C.-Y."/>
            <person name="McMahan C."/>
            <person name="Muszewska A."/>
            <person name="Grynberg M."/>
            <person name="Mandel M.A."/>
            <person name="Kellner E.M."/>
            <person name="Barker B.M."/>
            <person name="Galgiani J.N."/>
            <person name="Orbach M.J."/>
            <person name="Kirkland T.N."/>
            <person name="Cole G.T."/>
            <person name="Henn M.R."/>
            <person name="Birren B.W."/>
            <person name="Taylor J.W."/>
        </authorList>
    </citation>
    <scope>NUCLEOTIDE SEQUENCE [LARGE SCALE GENOMIC DNA]</scope>
    <source>
        <strain>NAm1 / WU24</strain>
    </source>
</reference>
<name>SLX4_AJECN</name>
<protein>
    <recommendedName>
        <fullName evidence="1">Structure-specific endonuclease subunit SLX4</fullName>
    </recommendedName>
</protein>
<proteinExistence type="inferred from homology"/>
<organism>
    <name type="scientific">Ajellomyces capsulatus (strain NAm1 / WU24)</name>
    <name type="common">Darling's disease fungus</name>
    <name type="synonym">Histoplasma capsulatum</name>
    <dbReference type="NCBI Taxonomy" id="2059318"/>
    <lineage>
        <taxon>Eukaryota</taxon>
        <taxon>Fungi</taxon>
        <taxon>Dikarya</taxon>
        <taxon>Ascomycota</taxon>
        <taxon>Pezizomycotina</taxon>
        <taxon>Eurotiomycetes</taxon>
        <taxon>Eurotiomycetidae</taxon>
        <taxon>Onygenales</taxon>
        <taxon>Ajellomycetaceae</taxon>
        <taxon>Histoplasma</taxon>
    </lineage>
</organism>
<keyword id="KW-0227">DNA damage</keyword>
<keyword id="KW-0233">DNA recombination</keyword>
<keyword id="KW-0234">DNA repair</keyword>
<keyword id="KW-0539">Nucleus</keyword>
<keyword id="KW-0597">Phosphoprotein</keyword>
<keyword id="KW-1185">Reference proteome</keyword>
<feature type="chain" id="PRO_0000388008" description="Structure-specific endonuclease subunit SLX4">
    <location>
        <begin position="1"/>
        <end position="834"/>
    </location>
</feature>
<feature type="region of interest" description="Disordered" evidence="2">
    <location>
        <begin position="80"/>
        <end position="105"/>
    </location>
</feature>
<feature type="region of interest" description="Disordered" evidence="2">
    <location>
        <begin position="272"/>
        <end position="307"/>
    </location>
</feature>
<feature type="region of interest" description="Disordered" evidence="2">
    <location>
        <begin position="332"/>
        <end position="372"/>
    </location>
</feature>
<feature type="region of interest" description="Disordered" evidence="2">
    <location>
        <begin position="401"/>
        <end position="421"/>
    </location>
</feature>
<feature type="region of interest" description="Disordered" evidence="2">
    <location>
        <begin position="603"/>
        <end position="649"/>
    </location>
</feature>
<feature type="region of interest" description="Disordered" evidence="2">
    <location>
        <begin position="720"/>
        <end position="740"/>
    </location>
</feature>
<feature type="compositionally biased region" description="Polar residues" evidence="2">
    <location>
        <begin position="279"/>
        <end position="295"/>
    </location>
</feature>
<feature type="compositionally biased region" description="Basic residues" evidence="2">
    <location>
        <begin position="296"/>
        <end position="305"/>
    </location>
</feature>
<feature type="compositionally biased region" description="Polar residues" evidence="2">
    <location>
        <begin position="345"/>
        <end position="366"/>
    </location>
</feature>
<feature type="compositionally biased region" description="Polar residues" evidence="2">
    <location>
        <begin position="412"/>
        <end position="421"/>
    </location>
</feature>
<feature type="compositionally biased region" description="Basic and acidic residues" evidence="2">
    <location>
        <begin position="611"/>
        <end position="630"/>
    </location>
</feature>
<feature type="compositionally biased region" description="Low complexity" evidence="2">
    <location>
        <begin position="729"/>
        <end position="740"/>
    </location>
</feature>
<evidence type="ECO:0000255" key="1">
    <source>
        <dbReference type="HAMAP-Rule" id="MF_03110"/>
    </source>
</evidence>
<evidence type="ECO:0000256" key="2">
    <source>
        <dbReference type="SAM" id="MobiDB-lite"/>
    </source>
</evidence>
<accession>A6R4H9</accession>
<comment type="function">
    <text evidence="1">Regulatory subunit of the SLX1-SLX4 structure-specific endonuclease that resolves DNA secondary structures generated during DNA repair and recombination. Has endonuclease activity towards branched DNA substrates, introducing single-strand cuts in duplex DNA close to junctions with ss-DNA.</text>
</comment>
<comment type="subunit">
    <text evidence="1">Forms a heterodimer with SLX1.</text>
</comment>
<comment type="subcellular location">
    <subcellularLocation>
        <location evidence="1">Nucleus</location>
    </subcellularLocation>
</comment>
<comment type="PTM">
    <text evidence="1">Phosphorylated in response to DNA damage.</text>
</comment>
<comment type="similarity">
    <text evidence="1">Belongs to the SLX4 family.</text>
</comment>
<dbReference type="EMBL" id="CH476658">
    <property type="protein sequence ID" value="EDN08027.1"/>
    <property type="molecule type" value="Genomic_DNA"/>
</dbReference>
<dbReference type="SMR" id="A6R4H9"/>
<dbReference type="STRING" id="339724.A6R4H9"/>
<dbReference type="KEGG" id="aje:HCAG_04537"/>
<dbReference type="VEuPathDB" id="FungiDB:HCAG_04537"/>
<dbReference type="HOGENOM" id="CLU_016773_0_0_1"/>
<dbReference type="OMA" id="SICCLWK"/>
<dbReference type="OrthoDB" id="13110at299071"/>
<dbReference type="Proteomes" id="UP000009297">
    <property type="component" value="Unassembled WGS sequence"/>
</dbReference>
<dbReference type="GO" id="GO:0033557">
    <property type="term" value="C:Slx1-Slx4 complex"/>
    <property type="evidence" value="ECO:0007669"/>
    <property type="project" value="UniProtKB-UniRule"/>
</dbReference>
<dbReference type="GO" id="GO:0017108">
    <property type="term" value="F:5'-flap endonuclease activity"/>
    <property type="evidence" value="ECO:0007669"/>
    <property type="project" value="InterPro"/>
</dbReference>
<dbReference type="GO" id="GO:0006310">
    <property type="term" value="P:DNA recombination"/>
    <property type="evidence" value="ECO:0007669"/>
    <property type="project" value="UniProtKB-UniRule"/>
</dbReference>
<dbReference type="GO" id="GO:0006281">
    <property type="term" value="P:DNA repair"/>
    <property type="evidence" value="ECO:0007669"/>
    <property type="project" value="UniProtKB-UniRule"/>
</dbReference>
<dbReference type="GO" id="GO:0006260">
    <property type="term" value="P:DNA replication"/>
    <property type="evidence" value="ECO:0007669"/>
    <property type="project" value="InterPro"/>
</dbReference>
<dbReference type="CDD" id="cd22999">
    <property type="entry name" value="SAP_SLX4"/>
    <property type="match status" value="1"/>
</dbReference>
<dbReference type="HAMAP" id="MF_03110">
    <property type="entry name" value="Endonuc_su_Slx4"/>
    <property type="match status" value="1"/>
</dbReference>
<dbReference type="InterPro" id="IPR027784">
    <property type="entry name" value="Slx4_ascomycetes"/>
</dbReference>
<dbReference type="InterPro" id="IPR018574">
    <property type="entry name" value="Structure-sp_endonuc_su_Slx4"/>
</dbReference>
<dbReference type="Pfam" id="PF09494">
    <property type="entry name" value="Slx4"/>
    <property type="match status" value="1"/>
</dbReference>
<sequence length="834" mass="91204">MDNTAITSQSSSTPLVCSVTPIIVGSPPSPANVIELSSPSTPPTPLTLLASLSETPSRKTTNPDTNGENTICHGVRQVRRVPRNNPVTGPSKEHKQRTRSPKTTTRREIKIVEGDRLIVGHDKREKKGETTKRMKKRDGVADKKLYARVSKVKSSENLDLDAKIPSSKVCNNTLPLVGDDMDNGSSELKLEQAIKRRHDWTPTREVTTPVVDVAELHSSPCGKAVTRMHGVGTLLSDYGFSGVVETSLGTKSESFRNAPTTKRPMELQKFSTVPAIPTPTESSTTEDVQGSSSKQQRVKAKKPQKGKLTTITSHATAKYCVADQTVDLDYIQNVAPKSPRRKNISNRPSGTKHSNSGRGKSSTLKNDNGRPVFRVVPPLEAFKSFEGQELLFGTSSQLERGYPEYPCDETQDTQNSPSNSAAVSELAVPYRISSEGKDLGSSLFGLSGSKNLWSASARDLTGAVFEGDEIDFQGASMGLSVLATKSRCHPGNRGPPRRNLVDVDNVPDKKLDIDTTEGENGNHSSVADNIVDRENLNPKISANTSETNLECAPQNKPAFSRFTTSELAKKVAAYGFKPIKSRDNMISLLEKCWETQSKTLILESKPNQGTDDARKNGFRKENHSDVRVRPDSATLANRRSPKKQQAKALSKFQEPNNFLPIENSTTTASMLPIISSHTILINDDQLSDSVGETVSFLPSLDHNGNGTTIQENMLEIKSPATPNARRSRQGSSSASFSIEPPSLASQITKAIKSQPRTRAFNGLKQPTWYEKILMYDPIQLEDLAAWLNTDGFGRIGEDREVGPGVVREWCESKGVCCVWKKQVSGRSHYLPMVS</sequence>
<gene>
    <name evidence="1" type="primary">SLX4</name>
    <name type="ORF">HCAG_04537</name>
</gene>